<keyword id="KW-0963">Cytoplasm</keyword>
<keyword id="KW-0479">Metal-binding</keyword>
<keyword id="KW-0520">NAD</keyword>
<keyword id="KW-0560">Oxidoreductase</keyword>
<keyword id="KW-1185">Reference proteome</keyword>
<keyword id="KW-0862">Zinc</keyword>
<sequence length="344" mass="37499">MKALSKQESRAGIWMVDTEVPRPGPNDLLIRVKKGSICGTDVHIYKWDEWAQKTIPVPMVVGHEYVGVVAAMGSEVRGFNVGDRVSGEGHVTCGHCRNCRAGRRHLCRNTLGVGVNRPGSFAEYLVLPAFNAFKLPDDIPDDVAAIFDPFGNAVHTALSFDLVGEDVLVTGAGPIGVMAAAVARHVGARNVVITDINDYRLDLARKMGVTRAVNVTKEDLWSVARNELGMTEGFDVGLEMSGSGPAFAQMVDVMNNGGKIALLGIPSGDVRIDWNAVIFKMLTIKGIYGREMFETWYKMAALIQSGLDLRPIITHHFGIDDFQQGFDAMLSGQSGKVILDWEKR</sequence>
<proteinExistence type="inferred from homology"/>
<accession>C1D195</accession>
<dbReference type="EC" id="1.1.1.103" evidence="1"/>
<dbReference type="EMBL" id="CP001114">
    <property type="protein sequence ID" value="ACO45619.1"/>
    <property type="molecule type" value="Genomic_DNA"/>
</dbReference>
<dbReference type="RefSeq" id="WP_012692742.1">
    <property type="nucleotide sequence ID" value="NC_012526.1"/>
</dbReference>
<dbReference type="SMR" id="C1D195"/>
<dbReference type="STRING" id="546414.Deide_07570"/>
<dbReference type="PaxDb" id="546414-Deide_07570"/>
<dbReference type="KEGG" id="ddr:Deide_07570"/>
<dbReference type="eggNOG" id="COG1063">
    <property type="taxonomic scope" value="Bacteria"/>
</dbReference>
<dbReference type="HOGENOM" id="CLU_026673_11_0_0"/>
<dbReference type="OrthoDB" id="9769198at2"/>
<dbReference type="UniPathway" id="UPA00046">
    <property type="reaction ID" value="UER00505"/>
</dbReference>
<dbReference type="Proteomes" id="UP000002208">
    <property type="component" value="Chromosome"/>
</dbReference>
<dbReference type="GO" id="GO:0005737">
    <property type="term" value="C:cytoplasm"/>
    <property type="evidence" value="ECO:0007669"/>
    <property type="project" value="UniProtKB-SubCell"/>
</dbReference>
<dbReference type="GO" id="GO:0008743">
    <property type="term" value="F:L-threonine 3-dehydrogenase activity"/>
    <property type="evidence" value="ECO:0007669"/>
    <property type="project" value="UniProtKB-UniRule"/>
</dbReference>
<dbReference type="GO" id="GO:0008270">
    <property type="term" value="F:zinc ion binding"/>
    <property type="evidence" value="ECO:0007669"/>
    <property type="project" value="UniProtKB-UniRule"/>
</dbReference>
<dbReference type="GO" id="GO:0019518">
    <property type="term" value="P:L-threonine catabolic process to glycine"/>
    <property type="evidence" value="ECO:0007669"/>
    <property type="project" value="UniProtKB-UniPathway"/>
</dbReference>
<dbReference type="Gene3D" id="3.90.180.10">
    <property type="entry name" value="Medium-chain alcohol dehydrogenases, catalytic domain"/>
    <property type="match status" value="1"/>
</dbReference>
<dbReference type="Gene3D" id="3.40.50.720">
    <property type="entry name" value="NAD(P)-binding Rossmann-like Domain"/>
    <property type="match status" value="1"/>
</dbReference>
<dbReference type="HAMAP" id="MF_00627">
    <property type="entry name" value="Thr_dehydrog"/>
    <property type="match status" value="1"/>
</dbReference>
<dbReference type="InterPro" id="IPR013149">
    <property type="entry name" value="ADH-like_C"/>
</dbReference>
<dbReference type="InterPro" id="IPR013154">
    <property type="entry name" value="ADH-like_N"/>
</dbReference>
<dbReference type="InterPro" id="IPR002328">
    <property type="entry name" value="ADH_Zn_CS"/>
</dbReference>
<dbReference type="InterPro" id="IPR011032">
    <property type="entry name" value="GroES-like_sf"/>
</dbReference>
<dbReference type="InterPro" id="IPR004627">
    <property type="entry name" value="L-Threonine_3-DHase"/>
</dbReference>
<dbReference type="InterPro" id="IPR036291">
    <property type="entry name" value="NAD(P)-bd_dom_sf"/>
</dbReference>
<dbReference type="InterPro" id="IPR020843">
    <property type="entry name" value="PKS_ER"/>
</dbReference>
<dbReference type="InterPro" id="IPR050129">
    <property type="entry name" value="Zn_alcohol_dh"/>
</dbReference>
<dbReference type="NCBIfam" id="NF003808">
    <property type="entry name" value="PRK05396.1"/>
    <property type="match status" value="1"/>
</dbReference>
<dbReference type="NCBIfam" id="TIGR00692">
    <property type="entry name" value="tdh"/>
    <property type="match status" value="1"/>
</dbReference>
<dbReference type="PANTHER" id="PTHR43401">
    <property type="entry name" value="L-THREONINE 3-DEHYDROGENASE"/>
    <property type="match status" value="1"/>
</dbReference>
<dbReference type="PANTHER" id="PTHR43401:SF2">
    <property type="entry name" value="L-THREONINE 3-DEHYDROGENASE"/>
    <property type="match status" value="1"/>
</dbReference>
<dbReference type="Pfam" id="PF08240">
    <property type="entry name" value="ADH_N"/>
    <property type="match status" value="1"/>
</dbReference>
<dbReference type="Pfam" id="PF00107">
    <property type="entry name" value="ADH_zinc_N"/>
    <property type="match status" value="1"/>
</dbReference>
<dbReference type="SMART" id="SM00829">
    <property type="entry name" value="PKS_ER"/>
    <property type="match status" value="1"/>
</dbReference>
<dbReference type="SUPFAM" id="SSF50129">
    <property type="entry name" value="GroES-like"/>
    <property type="match status" value="1"/>
</dbReference>
<dbReference type="SUPFAM" id="SSF51735">
    <property type="entry name" value="NAD(P)-binding Rossmann-fold domains"/>
    <property type="match status" value="1"/>
</dbReference>
<dbReference type="PROSITE" id="PS00059">
    <property type="entry name" value="ADH_ZINC"/>
    <property type="match status" value="1"/>
</dbReference>
<evidence type="ECO:0000255" key="1">
    <source>
        <dbReference type="HAMAP-Rule" id="MF_00627"/>
    </source>
</evidence>
<reference key="1">
    <citation type="journal article" date="2009" name="PLoS Genet.">
        <title>Alliance of proteomics and genomics to unravel the specificities of Sahara bacterium Deinococcus deserti.</title>
        <authorList>
            <person name="de Groot A."/>
            <person name="Dulermo R."/>
            <person name="Ortet P."/>
            <person name="Blanchard L."/>
            <person name="Guerin P."/>
            <person name="Fernandez B."/>
            <person name="Vacherie B."/>
            <person name="Dossat C."/>
            <person name="Jolivet E."/>
            <person name="Siguier P."/>
            <person name="Chandler M."/>
            <person name="Barakat M."/>
            <person name="Dedieu A."/>
            <person name="Barbe V."/>
            <person name="Heulin T."/>
            <person name="Sommer S."/>
            <person name="Achouak W."/>
            <person name="Armengaud J."/>
        </authorList>
    </citation>
    <scope>NUCLEOTIDE SEQUENCE [LARGE SCALE GENOMIC DNA]</scope>
    <source>
        <strain>DSM 17065 / CIP 109153 / LMG 22923 / VCD115</strain>
    </source>
</reference>
<organism>
    <name type="scientific">Deinococcus deserti (strain DSM 17065 / CIP 109153 / LMG 22923 / VCD115)</name>
    <dbReference type="NCBI Taxonomy" id="546414"/>
    <lineage>
        <taxon>Bacteria</taxon>
        <taxon>Thermotogati</taxon>
        <taxon>Deinococcota</taxon>
        <taxon>Deinococci</taxon>
        <taxon>Deinococcales</taxon>
        <taxon>Deinococcaceae</taxon>
        <taxon>Deinococcus</taxon>
    </lineage>
</organism>
<gene>
    <name evidence="1" type="primary">tdh</name>
    <name type="ordered locus">Deide_07570</name>
</gene>
<name>TDH_DEIDV</name>
<feature type="chain" id="PRO_1000212310" description="L-threonine 3-dehydrogenase">
    <location>
        <begin position="1"/>
        <end position="344"/>
    </location>
</feature>
<feature type="active site" description="Charge relay system" evidence="1">
    <location>
        <position position="40"/>
    </location>
</feature>
<feature type="active site" description="Charge relay system" evidence="1">
    <location>
        <position position="43"/>
    </location>
</feature>
<feature type="binding site" evidence="1">
    <location>
        <position position="38"/>
    </location>
    <ligand>
        <name>Zn(2+)</name>
        <dbReference type="ChEBI" id="CHEBI:29105"/>
        <label>1</label>
        <note>catalytic</note>
    </ligand>
</feature>
<feature type="binding site" evidence="1">
    <location>
        <position position="63"/>
    </location>
    <ligand>
        <name>Zn(2+)</name>
        <dbReference type="ChEBI" id="CHEBI:29105"/>
        <label>1</label>
        <note>catalytic</note>
    </ligand>
</feature>
<feature type="binding site" evidence="1">
    <location>
        <position position="64"/>
    </location>
    <ligand>
        <name>Zn(2+)</name>
        <dbReference type="ChEBI" id="CHEBI:29105"/>
        <label>1</label>
        <note>catalytic</note>
    </ligand>
</feature>
<feature type="binding site" evidence="1">
    <location>
        <position position="93"/>
    </location>
    <ligand>
        <name>Zn(2+)</name>
        <dbReference type="ChEBI" id="CHEBI:29105"/>
        <label>2</label>
    </ligand>
</feature>
<feature type="binding site" evidence="1">
    <location>
        <position position="96"/>
    </location>
    <ligand>
        <name>Zn(2+)</name>
        <dbReference type="ChEBI" id="CHEBI:29105"/>
        <label>2</label>
    </ligand>
</feature>
<feature type="binding site" evidence="1">
    <location>
        <position position="99"/>
    </location>
    <ligand>
        <name>Zn(2+)</name>
        <dbReference type="ChEBI" id="CHEBI:29105"/>
        <label>2</label>
    </ligand>
</feature>
<feature type="binding site" evidence="1">
    <location>
        <position position="107"/>
    </location>
    <ligand>
        <name>Zn(2+)</name>
        <dbReference type="ChEBI" id="CHEBI:29105"/>
        <label>2</label>
    </ligand>
</feature>
<feature type="binding site" evidence="1">
    <location>
        <position position="175"/>
    </location>
    <ligand>
        <name>NAD(+)</name>
        <dbReference type="ChEBI" id="CHEBI:57540"/>
    </ligand>
</feature>
<feature type="binding site" evidence="1">
    <location>
        <position position="195"/>
    </location>
    <ligand>
        <name>NAD(+)</name>
        <dbReference type="ChEBI" id="CHEBI:57540"/>
    </ligand>
</feature>
<feature type="binding site" evidence="1">
    <location>
        <position position="200"/>
    </location>
    <ligand>
        <name>NAD(+)</name>
        <dbReference type="ChEBI" id="CHEBI:57540"/>
    </ligand>
</feature>
<feature type="binding site" evidence="1">
    <location>
        <begin position="263"/>
        <end position="265"/>
    </location>
    <ligand>
        <name>NAD(+)</name>
        <dbReference type="ChEBI" id="CHEBI:57540"/>
    </ligand>
</feature>
<feature type="binding site" evidence="1">
    <location>
        <begin position="287"/>
        <end position="288"/>
    </location>
    <ligand>
        <name>NAD(+)</name>
        <dbReference type="ChEBI" id="CHEBI:57540"/>
    </ligand>
</feature>
<feature type="site" description="Important for catalytic activity for the proton relay mechanism but does not participate directly in the coordination of zinc atom" evidence="1">
    <location>
        <position position="148"/>
    </location>
</feature>
<protein>
    <recommendedName>
        <fullName evidence="1">L-threonine 3-dehydrogenase</fullName>
        <shortName evidence="1">TDH</shortName>
        <ecNumber evidence="1">1.1.1.103</ecNumber>
    </recommendedName>
</protein>
<comment type="function">
    <text evidence="1">Catalyzes the NAD(+)-dependent oxidation of L-threonine to 2-amino-3-ketobutyrate.</text>
</comment>
<comment type="catalytic activity">
    <reaction evidence="1">
        <text>L-threonine + NAD(+) = (2S)-2-amino-3-oxobutanoate + NADH + H(+)</text>
        <dbReference type="Rhea" id="RHEA:13161"/>
        <dbReference type="ChEBI" id="CHEBI:15378"/>
        <dbReference type="ChEBI" id="CHEBI:57540"/>
        <dbReference type="ChEBI" id="CHEBI:57926"/>
        <dbReference type="ChEBI" id="CHEBI:57945"/>
        <dbReference type="ChEBI" id="CHEBI:78948"/>
        <dbReference type="EC" id="1.1.1.103"/>
    </reaction>
</comment>
<comment type="cofactor">
    <cofactor evidence="1">
        <name>Zn(2+)</name>
        <dbReference type="ChEBI" id="CHEBI:29105"/>
    </cofactor>
    <text evidence="1">Binds 2 Zn(2+) ions per subunit.</text>
</comment>
<comment type="pathway">
    <text evidence="1">Amino-acid degradation; L-threonine degradation via oxydo-reductase pathway; glycine from L-threonine: step 1/2.</text>
</comment>
<comment type="subunit">
    <text evidence="1">Homotetramer.</text>
</comment>
<comment type="subcellular location">
    <subcellularLocation>
        <location evidence="1">Cytoplasm</location>
    </subcellularLocation>
</comment>
<comment type="similarity">
    <text evidence="1">Belongs to the zinc-containing alcohol dehydrogenase family.</text>
</comment>